<accession>B8JDD8</accession>
<gene>
    <name evidence="1" type="primary">glyS</name>
    <name type="ordered locus">A2cp1_2650</name>
</gene>
<keyword id="KW-0030">Aminoacyl-tRNA synthetase</keyword>
<keyword id="KW-0067">ATP-binding</keyword>
<keyword id="KW-0963">Cytoplasm</keyword>
<keyword id="KW-0436">Ligase</keyword>
<keyword id="KW-0547">Nucleotide-binding</keyword>
<keyword id="KW-0648">Protein biosynthesis</keyword>
<organism>
    <name type="scientific">Anaeromyxobacter dehalogenans (strain 2CP-1 / ATCC BAA-258)</name>
    <dbReference type="NCBI Taxonomy" id="455488"/>
    <lineage>
        <taxon>Bacteria</taxon>
        <taxon>Pseudomonadati</taxon>
        <taxon>Myxococcota</taxon>
        <taxon>Myxococcia</taxon>
        <taxon>Myxococcales</taxon>
        <taxon>Cystobacterineae</taxon>
        <taxon>Anaeromyxobacteraceae</taxon>
        <taxon>Anaeromyxobacter</taxon>
    </lineage>
</organism>
<reference key="1">
    <citation type="submission" date="2009-01" db="EMBL/GenBank/DDBJ databases">
        <title>Complete sequence of Anaeromyxobacter dehalogenans 2CP-1.</title>
        <authorList>
            <person name="Lucas S."/>
            <person name="Copeland A."/>
            <person name="Lapidus A."/>
            <person name="Glavina del Rio T."/>
            <person name="Dalin E."/>
            <person name="Tice H."/>
            <person name="Bruce D."/>
            <person name="Goodwin L."/>
            <person name="Pitluck S."/>
            <person name="Saunders E."/>
            <person name="Brettin T."/>
            <person name="Detter J.C."/>
            <person name="Han C."/>
            <person name="Larimer F."/>
            <person name="Land M."/>
            <person name="Hauser L."/>
            <person name="Kyrpides N."/>
            <person name="Ovchinnikova G."/>
            <person name="Beliaev A.S."/>
            <person name="Richardson P."/>
        </authorList>
    </citation>
    <scope>NUCLEOTIDE SEQUENCE [LARGE SCALE GENOMIC DNA]</scope>
    <source>
        <strain>2CP-1 / ATCC BAA-258</strain>
    </source>
</reference>
<proteinExistence type="inferred from homology"/>
<feature type="chain" id="PRO_1000197166" description="Glycine--tRNA ligase beta subunit">
    <location>
        <begin position="1"/>
        <end position="701"/>
    </location>
</feature>
<dbReference type="EC" id="6.1.1.14" evidence="1"/>
<dbReference type="EMBL" id="CP001359">
    <property type="protein sequence ID" value="ACL65987.1"/>
    <property type="molecule type" value="Genomic_DNA"/>
</dbReference>
<dbReference type="RefSeq" id="WP_012633767.1">
    <property type="nucleotide sequence ID" value="NC_011891.1"/>
</dbReference>
<dbReference type="SMR" id="B8JDD8"/>
<dbReference type="KEGG" id="acp:A2cp1_2650"/>
<dbReference type="HOGENOM" id="CLU_007220_2_2_7"/>
<dbReference type="Proteomes" id="UP000007089">
    <property type="component" value="Chromosome"/>
</dbReference>
<dbReference type="GO" id="GO:0005829">
    <property type="term" value="C:cytosol"/>
    <property type="evidence" value="ECO:0007669"/>
    <property type="project" value="TreeGrafter"/>
</dbReference>
<dbReference type="GO" id="GO:0004814">
    <property type="term" value="F:arginine-tRNA ligase activity"/>
    <property type="evidence" value="ECO:0007669"/>
    <property type="project" value="InterPro"/>
</dbReference>
<dbReference type="GO" id="GO:0005524">
    <property type="term" value="F:ATP binding"/>
    <property type="evidence" value="ECO:0007669"/>
    <property type="project" value="UniProtKB-UniRule"/>
</dbReference>
<dbReference type="GO" id="GO:0004820">
    <property type="term" value="F:glycine-tRNA ligase activity"/>
    <property type="evidence" value="ECO:0007669"/>
    <property type="project" value="UniProtKB-UniRule"/>
</dbReference>
<dbReference type="GO" id="GO:0006420">
    <property type="term" value="P:arginyl-tRNA aminoacylation"/>
    <property type="evidence" value="ECO:0007669"/>
    <property type="project" value="InterPro"/>
</dbReference>
<dbReference type="GO" id="GO:0006426">
    <property type="term" value="P:glycyl-tRNA aminoacylation"/>
    <property type="evidence" value="ECO:0007669"/>
    <property type="project" value="UniProtKB-UniRule"/>
</dbReference>
<dbReference type="HAMAP" id="MF_00255">
    <property type="entry name" value="Gly_tRNA_synth_beta"/>
    <property type="match status" value="1"/>
</dbReference>
<dbReference type="InterPro" id="IPR008909">
    <property type="entry name" value="DALR_anticod-bd"/>
</dbReference>
<dbReference type="InterPro" id="IPR015944">
    <property type="entry name" value="Gly-tRNA-synth_bsu"/>
</dbReference>
<dbReference type="InterPro" id="IPR006194">
    <property type="entry name" value="Gly-tRNA-synth_heterodimer"/>
</dbReference>
<dbReference type="NCBIfam" id="TIGR00211">
    <property type="entry name" value="glyS"/>
    <property type="match status" value="1"/>
</dbReference>
<dbReference type="PANTHER" id="PTHR30075:SF2">
    <property type="entry name" value="GLYCINE--TRNA LIGASE, CHLOROPLASTIC_MITOCHONDRIAL 2"/>
    <property type="match status" value="1"/>
</dbReference>
<dbReference type="PANTHER" id="PTHR30075">
    <property type="entry name" value="GLYCYL-TRNA SYNTHETASE"/>
    <property type="match status" value="1"/>
</dbReference>
<dbReference type="Pfam" id="PF05746">
    <property type="entry name" value="DALR_1"/>
    <property type="match status" value="1"/>
</dbReference>
<dbReference type="Pfam" id="PF02092">
    <property type="entry name" value="tRNA_synt_2f"/>
    <property type="match status" value="1"/>
</dbReference>
<dbReference type="PRINTS" id="PR01045">
    <property type="entry name" value="TRNASYNTHGB"/>
</dbReference>
<dbReference type="SMART" id="SM00836">
    <property type="entry name" value="DALR_1"/>
    <property type="match status" value="1"/>
</dbReference>
<dbReference type="SUPFAM" id="SSF109604">
    <property type="entry name" value="HD-domain/PDEase-like"/>
    <property type="match status" value="1"/>
</dbReference>
<dbReference type="PROSITE" id="PS50861">
    <property type="entry name" value="AA_TRNA_LIGASE_II_GLYAB"/>
    <property type="match status" value="1"/>
</dbReference>
<evidence type="ECO:0000255" key="1">
    <source>
        <dbReference type="HAMAP-Rule" id="MF_00255"/>
    </source>
</evidence>
<sequence>MADLLFEIGAEEIPAGFVPGALRQLEDDLSKALADARLAHGEVRSVGTPRRLAVWARDVAPKQTDARTEAFGPPVAQAYDAEGKPTPAATGFARSQGVEVSALVRAQTPKGERVAVTKVEKGRRAEQVLPALLERLVGGLRFRKAMRSRFDEATFARPVRWMVALLGGRPLKVRHGEVTSGKVTYGHRFLAPKAIALKGTPDDYLAKLRRAHVLADPVERRAALLAELARAGKEAAGKVRDDPALVEQVLYLVEEPTAVVGEFEKSNLELPPEVVISEMRNHQRYFAVVDGKGRLKNRFVAVSATRVKDPAVARHGYERVLRARLADARFFFEEDRKRRLHERIEDLGRRTFQAKLGSELDRAQRIGAVASALARALGKDALVADLLEASRLAKVDLNTGMVGEFPELQGTMGAHYARLEGLKPEIADAIEDHYKPIGAAEELPRSDLGALVAVADRLHSLVGIIGVGEKATGAADPFGLRRSAIGILRIVIARGYHLSLAAAVEQTLDALSGVKLAAGRAVVAEQVLDFLRGRVRAAWTERFDADLVEAVLAAGSDDVVDARRRLEALADAKARPDFGSLAVAFKRVANIQEKAGGSGAAAVDPALLRDAAEKDLLAALEKVEQEVVARRAARDYPAVLRTVATLEPAVARFFDGVLVMAEDPALRANRLGLMRRVAALFSDLADFRKIQAEAPAQARAG</sequence>
<protein>
    <recommendedName>
        <fullName evidence="1">Glycine--tRNA ligase beta subunit</fullName>
        <ecNumber evidence="1">6.1.1.14</ecNumber>
    </recommendedName>
    <alternativeName>
        <fullName evidence="1">Glycyl-tRNA synthetase beta subunit</fullName>
        <shortName evidence="1">GlyRS</shortName>
    </alternativeName>
</protein>
<name>SYGB_ANAD2</name>
<comment type="catalytic activity">
    <reaction evidence="1">
        <text>tRNA(Gly) + glycine + ATP = glycyl-tRNA(Gly) + AMP + diphosphate</text>
        <dbReference type="Rhea" id="RHEA:16013"/>
        <dbReference type="Rhea" id="RHEA-COMP:9664"/>
        <dbReference type="Rhea" id="RHEA-COMP:9683"/>
        <dbReference type="ChEBI" id="CHEBI:30616"/>
        <dbReference type="ChEBI" id="CHEBI:33019"/>
        <dbReference type="ChEBI" id="CHEBI:57305"/>
        <dbReference type="ChEBI" id="CHEBI:78442"/>
        <dbReference type="ChEBI" id="CHEBI:78522"/>
        <dbReference type="ChEBI" id="CHEBI:456215"/>
        <dbReference type="EC" id="6.1.1.14"/>
    </reaction>
</comment>
<comment type="subunit">
    <text evidence="1">Tetramer of two alpha and two beta subunits.</text>
</comment>
<comment type="subcellular location">
    <subcellularLocation>
        <location evidence="1">Cytoplasm</location>
    </subcellularLocation>
</comment>
<comment type="similarity">
    <text evidence="1">Belongs to the class-II aminoacyl-tRNA synthetase family.</text>
</comment>